<keyword id="KW-0963">Cytoplasm</keyword>
<keyword id="KW-0342">GTP-binding</keyword>
<keyword id="KW-0378">Hydrolase</keyword>
<keyword id="KW-0460">Magnesium</keyword>
<keyword id="KW-0479">Metal-binding</keyword>
<keyword id="KW-0547">Nucleotide-binding</keyword>
<keyword id="KW-1185">Reference proteome</keyword>
<comment type="function">
    <text evidence="1">An essential GTPase which binds GTP, GDP and possibly (p)ppGpp with moderate affinity, with high nucleotide exchange rates and a fairly low GTP hydrolysis rate. Plays a role in control of the cell cycle, stress response, ribosome biogenesis and in those bacteria that undergo differentiation, in morphogenesis control.</text>
</comment>
<comment type="cofactor">
    <cofactor evidence="1">
        <name>Mg(2+)</name>
        <dbReference type="ChEBI" id="CHEBI:18420"/>
    </cofactor>
</comment>
<comment type="subunit">
    <text evidence="1">Monomer.</text>
</comment>
<comment type="subcellular location">
    <subcellularLocation>
        <location evidence="1">Cytoplasm</location>
    </subcellularLocation>
</comment>
<comment type="similarity">
    <text evidence="1">Belongs to the TRAFAC class OBG-HflX-like GTPase superfamily. OBG GTPase family.</text>
</comment>
<protein>
    <recommendedName>
        <fullName evidence="1">GTPase Obg</fullName>
        <ecNumber evidence="1">3.6.5.-</ecNumber>
    </recommendedName>
    <alternativeName>
        <fullName evidence="1">GTP-binding protein Obg</fullName>
    </alternativeName>
</protein>
<dbReference type="EC" id="3.6.5.-" evidence="1"/>
<dbReference type="EMBL" id="CP000453">
    <property type="protein sequence ID" value="ABI56201.1"/>
    <property type="molecule type" value="Genomic_DNA"/>
</dbReference>
<dbReference type="RefSeq" id="WP_011628596.1">
    <property type="nucleotide sequence ID" value="NC_008340.1"/>
</dbReference>
<dbReference type="SMR" id="Q0AAD6"/>
<dbReference type="KEGG" id="aeh:Mlg_0847"/>
<dbReference type="eggNOG" id="COG0536">
    <property type="taxonomic scope" value="Bacteria"/>
</dbReference>
<dbReference type="HOGENOM" id="CLU_011747_2_0_6"/>
<dbReference type="OrthoDB" id="9807318at2"/>
<dbReference type="Proteomes" id="UP000001962">
    <property type="component" value="Chromosome"/>
</dbReference>
<dbReference type="GO" id="GO:0005737">
    <property type="term" value="C:cytoplasm"/>
    <property type="evidence" value="ECO:0007669"/>
    <property type="project" value="UniProtKB-SubCell"/>
</dbReference>
<dbReference type="GO" id="GO:0005525">
    <property type="term" value="F:GTP binding"/>
    <property type="evidence" value="ECO:0007669"/>
    <property type="project" value="UniProtKB-UniRule"/>
</dbReference>
<dbReference type="GO" id="GO:0003924">
    <property type="term" value="F:GTPase activity"/>
    <property type="evidence" value="ECO:0007669"/>
    <property type="project" value="UniProtKB-UniRule"/>
</dbReference>
<dbReference type="GO" id="GO:0000287">
    <property type="term" value="F:magnesium ion binding"/>
    <property type="evidence" value="ECO:0007669"/>
    <property type="project" value="InterPro"/>
</dbReference>
<dbReference type="GO" id="GO:0042254">
    <property type="term" value="P:ribosome biogenesis"/>
    <property type="evidence" value="ECO:0007669"/>
    <property type="project" value="UniProtKB-UniRule"/>
</dbReference>
<dbReference type="CDD" id="cd01898">
    <property type="entry name" value="Obg"/>
    <property type="match status" value="1"/>
</dbReference>
<dbReference type="FunFam" id="2.70.210.12:FF:000001">
    <property type="entry name" value="GTPase Obg"/>
    <property type="match status" value="1"/>
</dbReference>
<dbReference type="Gene3D" id="2.70.210.12">
    <property type="entry name" value="GTP1/OBG domain"/>
    <property type="match status" value="1"/>
</dbReference>
<dbReference type="Gene3D" id="3.40.50.300">
    <property type="entry name" value="P-loop containing nucleotide triphosphate hydrolases"/>
    <property type="match status" value="1"/>
</dbReference>
<dbReference type="HAMAP" id="MF_01454">
    <property type="entry name" value="GTPase_Obg"/>
    <property type="match status" value="1"/>
</dbReference>
<dbReference type="InterPro" id="IPR031167">
    <property type="entry name" value="G_OBG"/>
</dbReference>
<dbReference type="InterPro" id="IPR006073">
    <property type="entry name" value="GTP-bd"/>
</dbReference>
<dbReference type="InterPro" id="IPR014100">
    <property type="entry name" value="GTP-bd_Obg/CgtA"/>
</dbReference>
<dbReference type="InterPro" id="IPR006074">
    <property type="entry name" value="GTP1-OBG_CS"/>
</dbReference>
<dbReference type="InterPro" id="IPR006169">
    <property type="entry name" value="GTP1_OBG_dom"/>
</dbReference>
<dbReference type="InterPro" id="IPR036726">
    <property type="entry name" value="GTP1_OBG_dom_sf"/>
</dbReference>
<dbReference type="InterPro" id="IPR045086">
    <property type="entry name" value="OBG_GTPase"/>
</dbReference>
<dbReference type="InterPro" id="IPR027417">
    <property type="entry name" value="P-loop_NTPase"/>
</dbReference>
<dbReference type="NCBIfam" id="TIGR02729">
    <property type="entry name" value="Obg_CgtA"/>
    <property type="match status" value="1"/>
</dbReference>
<dbReference type="NCBIfam" id="NF008955">
    <property type="entry name" value="PRK12297.1"/>
    <property type="match status" value="1"/>
</dbReference>
<dbReference type="NCBIfam" id="NF008956">
    <property type="entry name" value="PRK12299.1"/>
    <property type="match status" value="1"/>
</dbReference>
<dbReference type="PANTHER" id="PTHR11702">
    <property type="entry name" value="DEVELOPMENTALLY REGULATED GTP-BINDING PROTEIN-RELATED"/>
    <property type="match status" value="1"/>
</dbReference>
<dbReference type="PANTHER" id="PTHR11702:SF31">
    <property type="entry name" value="MITOCHONDRIAL RIBOSOME-ASSOCIATED GTPASE 2"/>
    <property type="match status" value="1"/>
</dbReference>
<dbReference type="Pfam" id="PF01018">
    <property type="entry name" value="GTP1_OBG"/>
    <property type="match status" value="1"/>
</dbReference>
<dbReference type="Pfam" id="PF01926">
    <property type="entry name" value="MMR_HSR1"/>
    <property type="match status" value="1"/>
</dbReference>
<dbReference type="PIRSF" id="PIRSF002401">
    <property type="entry name" value="GTP_bd_Obg/CgtA"/>
    <property type="match status" value="1"/>
</dbReference>
<dbReference type="PRINTS" id="PR00326">
    <property type="entry name" value="GTP1OBG"/>
</dbReference>
<dbReference type="SUPFAM" id="SSF82051">
    <property type="entry name" value="Obg GTP-binding protein N-terminal domain"/>
    <property type="match status" value="1"/>
</dbReference>
<dbReference type="SUPFAM" id="SSF52540">
    <property type="entry name" value="P-loop containing nucleoside triphosphate hydrolases"/>
    <property type="match status" value="1"/>
</dbReference>
<dbReference type="PROSITE" id="PS51710">
    <property type="entry name" value="G_OBG"/>
    <property type="match status" value="1"/>
</dbReference>
<dbReference type="PROSITE" id="PS00905">
    <property type="entry name" value="GTP1_OBG"/>
    <property type="match status" value="1"/>
</dbReference>
<dbReference type="PROSITE" id="PS51883">
    <property type="entry name" value="OBG"/>
    <property type="match status" value="1"/>
</dbReference>
<accession>Q0AAD6</accession>
<evidence type="ECO:0000255" key="1">
    <source>
        <dbReference type="HAMAP-Rule" id="MF_01454"/>
    </source>
</evidence>
<evidence type="ECO:0000255" key="2">
    <source>
        <dbReference type="PROSITE-ProRule" id="PRU01231"/>
    </source>
</evidence>
<evidence type="ECO:0000256" key="3">
    <source>
        <dbReference type="SAM" id="MobiDB-lite"/>
    </source>
</evidence>
<name>OBG_ALKEH</name>
<proteinExistence type="inferred from homology"/>
<sequence>MKFVDEVTIRVEGGDGGDGCASFRREKYIPRGGPDGGDGGHGGSVWLRADEGLNTLADFRHERKFTAQRGENGMGKQRYGKSGQDREIAVPVGTLVSDADTGELIGELLEHGQRLLVARGGKGGLGNVHFKSSTNRAPRQYTPGTKADRRNLHLELRLLADVGLLGMPNAGKSTLVRAISSARPRVADYPFTTLYPNLGVVSVGAARSFVVADIPGLIEGAAEGAGLGIQFLKHLGRTRLVLHVIDAVPLDPAQDPVDDARKIVAELGRYSESLAARERWLVLNKLDLLPEEDRDAHVNDLLQRLQWGGPVYRISALSGDGTRQLAQDVMNRLEVMDEEAREAGERARREQRQEEGPE</sequence>
<gene>
    <name evidence="1" type="primary">obg</name>
    <name type="ordered locus">Mlg_0847</name>
</gene>
<reference key="1">
    <citation type="submission" date="2006-08" db="EMBL/GenBank/DDBJ databases">
        <title>Complete sequence of Alkalilimnicola ehrilichei MLHE-1.</title>
        <authorList>
            <person name="Copeland A."/>
            <person name="Lucas S."/>
            <person name="Lapidus A."/>
            <person name="Barry K."/>
            <person name="Detter J.C."/>
            <person name="Glavina del Rio T."/>
            <person name="Hammon N."/>
            <person name="Israni S."/>
            <person name="Dalin E."/>
            <person name="Tice H."/>
            <person name="Pitluck S."/>
            <person name="Sims D."/>
            <person name="Brettin T."/>
            <person name="Bruce D."/>
            <person name="Han C."/>
            <person name="Tapia R."/>
            <person name="Gilna P."/>
            <person name="Schmutz J."/>
            <person name="Larimer F."/>
            <person name="Land M."/>
            <person name="Hauser L."/>
            <person name="Kyrpides N."/>
            <person name="Mikhailova N."/>
            <person name="Oremland R.S."/>
            <person name="Hoeft S.E."/>
            <person name="Switzer-Blum J."/>
            <person name="Kulp T."/>
            <person name="King G."/>
            <person name="Tabita R."/>
            <person name="Witte B."/>
            <person name="Santini J.M."/>
            <person name="Basu P."/>
            <person name="Hollibaugh J.T."/>
            <person name="Xie G."/>
            <person name="Stolz J.F."/>
            <person name="Richardson P."/>
        </authorList>
    </citation>
    <scope>NUCLEOTIDE SEQUENCE [LARGE SCALE GENOMIC DNA]</scope>
    <source>
        <strain>ATCC BAA-1101 / DSM 17681 / MLHE-1</strain>
    </source>
</reference>
<organism>
    <name type="scientific">Alkalilimnicola ehrlichii (strain ATCC BAA-1101 / DSM 17681 / MLHE-1)</name>
    <dbReference type="NCBI Taxonomy" id="187272"/>
    <lineage>
        <taxon>Bacteria</taxon>
        <taxon>Pseudomonadati</taxon>
        <taxon>Pseudomonadota</taxon>
        <taxon>Gammaproteobacteria</taxon>
        <taxon>Chromatiales</taxon>
        <taxon>Ectothiorhodospiraceae</taxon>
        <taxon>Alkalilimnicola</taxon>
    </lineage>
</organism>
<feature type="chain" id="PRO_0000385684" description="GTPase Obg">
    <location>
        <begin position="1"/>
        <end position="358"/>
    </location>
</feature>
<feature type="domain" description="Obg" evidence="2">
    <location>
        <begin position="1"/>
        <end position="159"/>
    </location>
</feature>
<feature type="domain" description="OBG-type G" evidence="1">
    <location>
        <begin position="160"/>
        <end position="334"/>
    </location>
</feature>
<feature type="region of interest" description="Disordered" evidence="3">
    <location>
        <begin position="337"/>
        <end position="358"/>
    </location>
</feature>
<feature type="compositionally biased region" description="Basic and acidic residues" evidence="3">
    <location>
        <begin position="341"/>
        <end position="358"/>
    </location>
</feature>
<feature type="binding site" evidence="1">
    <location>
        <begin position="166"/>
        <end position="173"/>
    </location>
    <ligand>
        <name>GTP</name>
        <dbReference type="ChEBI" id="CHEBI:37565"/>
    </ligand>
</feature>
<feature type="binding site" evidence="1">
    <location>
        <position position="173"/>
    </location>
    <ligand>
        <name>Mg(2+)</name>
        <dbReference type="ChEBI" id="CHEBI:18420"/>
    </ligand>
</feature>
<feature type="binding site" evidence="1">
    <location>
        <begin position="191"/>
        <end position="195"/>
    </location>
    <ligand>
        <name>GTP</name>
        <dbReference type="ChEBI" id="CHEBI:37565"/>
    </ligand>
</feature>
<feature type="binding site" evidence="1">
    <location>
        <position position="193"/>
    </location>
    <ligand>
        <name>Mg(2+)</name>
        <dbReference type="ChEBI" id="CHEBI:18420"/>
    </ligand>
</feature>
<feature type="binding site" evidence="1">
    <location>
        <begin position="213"/>
        <end position="216"/>
    </location>
    <ligand>
        <name>GTP</name>
        <dbReference type="ChEBI" id="CHEBI:37565"/>
    </ligand>
</feature>
<feature type="binding site" evidence="1">
    <location>
        <begin position="284"/>
        <end position="287"/>
    </location>
    <ligand>
        <name>GTP</name>
        <dbReference type="ChEBI" id="CHEBI:37565"/>
    </ligand>
</feature>
<feature type="binding site" evidence="1">
    <location>
        <begin position="315"/>
        <end position="317"/>
    </location>
    <ligand>
        <name>GTP</name>
        <dbReference type="ChEBI" id="CHEBI:37565"/>
    </ligand>
</feature>